<accession>O83640</accession>
<proteinExistence type="inferred from homology"/>
<gene>
    <name evidence="1" type="primary">trpS</name>
    <name type="synonym">trsA</name>
    <name type="ordered locus">TP_0632</name>
</gene>
<name>SYW_TREPA</name>
<sequence length="337" mass="37562">MLRVLTGDRPTGRLHLGHYAGSLGTRLRIQSEHECFFIIADLHTLTTRHGRAQLAELPALVRELVLDYLACGIDAQRAVIYLQSAVPEVTELAFIFANLVTVPRLQRIPSLKEMAQAANLSELPFGLLGYPVLQAADILLARAHLVPVGKDNESHVELTREVAKRFNRLYGEVFPLPRALLSDCATLVGTDGQAKMSKSLGNAIFLSDDEETVRRKVRAMYTDPARTRADIPGRVEGNPVFAYHDAFNPNTDEVAHFKERYRAGRVGDTEVKDALARALNTFLEPIRARRAQLEQQPAYLARVLEEGCARMRAEARKTMQRVKEAMGLSARPLVHLP</sequence>
<dbReference type="EC" id="6.1.1.2" evidence="1"/>
<dbReference type="EMBL" id="AE000520">
    <property type="protein sequence ID" value="AAC65607.1"/>
    <property type="molecule type" value="Genomic_DNA"/>
</dbReference>
<dbReference type="PIR" id="F71300">
    <property type="entry name" value="F71300"/>
</dbReference>
<dbReference type="RefSeq" id="WP_010882078.1">
    <property type="nucleotide sequence ID" value="NC_021490.2"/>
</dbReference>
<dbReference type="SMR" id="O83640"/>
<dbReference type="IntAct" id="O83640">
    <property type="interactions" value="2"/>
</dbReference>
<dbReference type="STRING" id="243276.TP_0632"/>
<dbReference type="EnsemblBacteria" id="AAC65607">
    <property type="protein sequence ID" value="AAC65607"/>
    <property type="gene ID" value="TP_0632"/>
</dbReference>
<dbReference type="GeneID" id="93876399"/>
<dbReference type="KEGG" id="tpa:TP_0632"/>
<dbReference type="KEGG" id="tpw:TPANIC_0632"/>
<dbReference type="eggNOG" id="COG0180">
    <property type="taxonomic scope" value="Bacteria"/>
</dbReference>
<dbReference type="HOGENOM" id="CLU_029244_0_1_12"/>
<dbReference type="OrthoDB" id="9801042at2"/>
<dbReference type="Proteomes" id="UP000000811">
    <property type="component" value="Chromosome"/>
</dbReference>
<dbReference type="GO" id="GO:0005829">
    <property type="term" value="C:cytosol"/>
    <property type="evidence" value="ECO:0007669"/>
    <property type="project" value="TreeGrafter"/>
</dbReference>
<dbReference type="GO" id="GO:0005524">
    <property type="term" value="F:ATP binding"/>
    <property type="evidence" value="ECO:0007669"/>
    <property type="project" value="UniProtKB-UniRule"/>
</dbReference>
<dbReference type="GO" id="GO:0004830">
    <property type="term" value="F:tryptophan-tRNA ligase activity"/>
    <property type="evidence" value="ECO:0007669"/>
    <property type="project" value="UniProtKB-UniRule"/>
</dbReference>
<dbReference type="GO" id="GO:0006436">
    <property type="term" value="P:tryptophanyl-tRNA aminoacylation"/>
    <property type="evidence" value="ECO:0007669"/>
    <property type="project" value="UniProtKB-UniRule"/>
</dbReference>
<dbReference type="CDD" id="cd00806">
    <property type="entry name" value="TrpRS_core"/>
    <property type="match status" value="1"/>
</dbReference>
<dbReference type="FunFam" id="1.10.240.10:FF:000005">
    <property type="entry name" value="Tryptophan--tRNA ligase"/>
    <property type="match status" value="1"/>
</dbReference>
<dbReference type="Gene3D" id="3.40.50.620">
    <property type="entry name" value="HUPs"/>
    <property type="match status" value="1"/>
</dbReference>
<dbReference type="Gene3D" id="1.10.240.10">
    <property type="entry name" value="Tyrosyl-Transfer RNA Synthetase"/>
    <property type="match status" value="1"/>
</dbReference>
<dbReference type="HAMAP" id="MF_00140_B">
    <property type="entry name" value="Trp_tRNA_synth_B"/>
    <property type="match status" value="1"/>
</dbReference>
<dbReference type="InterPro" id="IPR001412">
    <property type="entry name" value="aa-tRNA-synth_I_CS"/>
</dbReference>
<dbReference type="InterPro" id="IPR002305">
    <property type="entry name" value="aa-tRNA-synth_Ic"/>
</dbReference>
<dbReference type="InterPro" id="IPR014729">
    <property type="entry name" value="Rossmann-like_a/b/a_fold"/>
</dbReference>
<dbReference type="InterPro" id="IPR002306">
    <property type="entry name" value="Trp-tRNA-ligase"/>
</dbReference>
<dbReference type="InterPro" id="IPR024109">
    <property type="entry name" value="Trp-tRNA-ligase_bac-type"/>
</dbReference>
<dbReference type="InterPro" id="IPR050203">
    <property type="entry name" value="Trp-tRNA_synthetase"/>
</dbReference>
<dbReference type="NCBIfam" id="TIGR00233">
    <property type="entry name" value="trpS"/>
    <property type="match status" value="1"/>
</dbReference>
<dbReference type="PANTHER" id="PTHR43766">
    <property type="entry name" value="TRYPTOPHAN--TRNA LIGASE, MITOCHONDRIAL"/>
    <property type="match status" value="1"/>
</dbReference>
<dbReference type="PANTHER" id="PTHR43766:SF1">
    <property type="entry name" value="TRYPTOPHAN--TRNA LIGASE, MITOCHONDRIAL"/>
    <property type="match status" value="1"/>
</dbReference>
<dbReference type="Pfam" id="PF00579">
    <property type="entry name" value="tRNA-synt_1b"/>
    <property type="match status" value="1"/>
</dbReference>
<dbReference type="PRINTS" id="PR01039">
    <property type="entry name" value="TRNASYNTHTRP"/>
</dbReference>
<dbReference type="SUPFAM" id="SSF52374">
    <property type="entry name" value="Nucleotidylyl transferase"/>
    <property type="match status" value="1"/>
</dbReference>
<dbReference type="PROSITE" id="PS00178">
    <property type="entry name" value="AA_TRNA_LIGASE_I"/>
    <property type="match status" value="1"/>
</dbReference>
<keyword id="KW-0030">Aminoacyl-tRNA synthetase</keyword>
<keyword id="KW-0067">ATP-binding</keyword>
<keyword id="KW-0963">Cytoplasm</keyword>
<keyword id="KW-0436">Ligase</keyword>
<keyword id="KW-0547">Nucleotide-binding</keyword>
<keyword id="KW-0648">Protein biosynthesis</keyword>
<keyword id="KW-1185">Reference proteome</keyword>
<reference key="1">
    <citation type="journal article" date="1998" name="Science">
        <title>Complete genome sequence of Treponema pallidum, the syphilis spirochete.</title>
        <authorList>
            <person name="Fraser C.M."/>
            <person name="Norris S.J."/>
            <person name="Weinstock G.M."/>
            <person name="White O."/>
            <person name="Sutton G.G."/>
            <person name="Dodson R.J."/>
            <person name="Gwinn M.L."/>
            <person name="Hickey E.K."/>
            <person name="Clayton R.A."/>
            <person name="Ketchum K.A."/>
            <person name="Sodergren E."/>
            <person name="Hardham J.M."/>
            <person name="McLeod M.P."/>
            <person name="Salzberg S.L."/>
            <person name="Peterson J.D."/>
            <person name="Khalak H.G."/>
            <person name="Richardson D.L."/>
            <person name="Howell J.K."/>
            <person name="Chidambaram M."/>
            <person name="Utterback T.R."/>
            <person name="McDonald L.A."/>
            <person name="Artiach P."/>
            <person name="Bowman C."/>
            <person name="Cotton M.D."/>
            <person name="Fujii C."/>
            <person name="Garland S.A."/>
            <person name="Hatch B."/>
            <person name="Horst K."/>
            <person name="Roberts K.M."/>
            <person name="Sandusky M."/>
            <person name="Weidman J.F."/>
            <person name="Smith H.O."/>
            <person name="Venter J.C."/>
        </authorList>
    </citation>
    <scope>NUCLEOTIDE SEQUENCE [LARGE SCALE GENOMIC DNA]</scope>
    <source>
        <strain>Nichols</strain>
    </source>
</reference>
<organism>
    <name type="scientific">Treponema pallidum (strain Nichols)</name>
    <dbReference type="NCBI Taxonomy" id="243276"/>
    <lineage>
        <taxon>Bacteria</taxon>
        <taxon>Pseudomonadati</taxon>
        <taxon>Spirochaetota</taxon>
        <taxon>Spirochaetia</taxon>
        <taxon>Spirochaetales</taxon>
        <taxon>Treponemataceae</taxon>
        <taxon>Treponema</taxon>
    </lineage>
</organism>
<evidence type="ECO:0000255" key="1">
    <source>
        <dbReference type="HAMAP-Rule" id="MF_00140"/>
    </source>
</evidence>
<protein>
    <recommendedName>
        <fullName evidence="1">Tryptophan--tRNA ligase</fullName>
        <ecNumber evidence="1">6.1.1.2</ecNumber>
    </recommendedName>
    <alternativeName>
        <fullName evidence="1">Tryptophanyl-tRNA synthetase</fullName>
        <shortName evidence="1">TrpRS</shortName>
    </alternativeName>
</protein>
<comment type="function">
    <text evidence="1">Catalyzes the attachment of tryptophan to tRNA(Trp).</text>
</comment>
<comment type="catalytic activity">
    <reaction evidence="1">
        <text>tRNA(Trp) + L-tryptophan + ATP = L-tryptophyl-tRNA(Trp) + AMP + diphosphate + H(+)</text>
        <dbReference type="Rhea" id="RHEA:24080"/>
        <dbReference type="Rhea" id="RHEA-COMP:9671"/>
        <dbReference type="Rhea" id="RHEA-COMP:9705"/>
        <dbReference type="ChEBI" id="CHEBI:15378"/>
        <dbReference type="ChEBI" id="CHEBI:30616"/>
        <dbReference type="ChEBI" id="CHEBI:33019"/>
        <dbReference type="ChEBI" id="CHEBI:57912"/>
        <dbReference type="ChEBI" id="CHEBI:78442"/>
        <dbReference type="ChEBI" id="CHEBI:78535"/>
        <dbReference type="ChEBI" id="CHEBI:456215"/>
        <dbReference type="EC" id="6.1.1.2"/>
    </reaction>
</comment>
<comment type="subunit">
    <text evidence="1">Homodimer.</text>
</comment>
<comment type="subcellular location">
    <subcellularLocation>
        <location evidence="1">Cytoplasm</location>
    </subcellularLocation>
</comment>
<comment type="similarity">
    <text evidence="1">Belongs to the class-I aminoacyl-tRNA synthetase family.</text>
</comment>
<feature type="chain" id="PRO_0000136701" description="Tryptophan--tRNA ligase">
    <location>
        <begin position="1"/>
        <end position="337"/>
    </location>
</feature>
<feature type="short sequence motif" description="'HIGH' region" evidence="1">
    <location>
        <begin position="10"/>
        <end position="18"/>
    </location>
</feature>
<feature type="short sequence motif" description="'KMSKS' region" evidence="1">
    <location>
        <begin position="195"/>
        <end position="199"/>
    </location>
</feature>
<feature type="binding site" evidence="1">
    <location>
        <begin position="9"/>
        <end position="11"/>
    </location>
    <ligand>
        <name>ATP</name>
        <dbReference type="ChEBI" id="CHEBI:30616"/>
    </ligand>
</feature>
<feature type="binding site" evidence="1">
    <location>
        <begin position="17"/>
        <end position="18"/>
    </location>
    <ligand>
        <name>ATP</name>
        <dbReference type="ChEBI" id="CHEBI:30616"/>
    </ligand>
</feature>
<feature type="binding site" evidence="1">
    <location>
        <position position="137"/>
    </location>
    <ligand>
        <name>L-tryptophan</name>
        <dbReference type="ChEBI" id="CHEBI:57912"/>
    </ligand>
</feature>
<feature type="binding site" evidence="1">
    <location>
        <begin position="149"/>
        <end position="151"/>
    </location>
    <ligand>
        <name>ATP</name>
        <dbReference type="ChEBI" id="CHEBI:30616"/>
    </ligand>
</feature>
<feature type="binding site" evidence="1">
    <location>
        <position position="187"/>
    </location>
    <ligand>
        <name>ATP</name>
        <dbReference type="ChEBI" id="CHEBI:30616"/>
    </ligand>
</feature>
<feature type="binding site" evidence="1">
    <location>
        <begin position="195"/>
        <end position="199"/>
    </location>
    <ligand>
        <name>ATP</name>
        <dbReference type="ChEBI" id="CHEBI:30616"/>
    </ligand>
</feature>